<gene>
    <name evidence="1" type="primary">trpA</name>
    <name type="ordered locus">CKL_1280</name>
</gene>
<sequence>MNRIDFKFKELKDQGKKALIPFITAGDPSLDTTVNIVLEMDKKGADIVEIGIPYSDPLADGPIIQGSSQRAIKGGAKIRNIMETVRKIRGKSEIPLVYMVYYSSIFKYGLERFIAEASAVGINGIIIPDLPIEERGDIMDITVKYEVHLIPLVAPTSKRRIQEIAAGGSGFVYCVSKNGVTGVGEKIKTDIKEYMELVGSYTELPKALGFGISGSSMAREFKPYCDGIIIGSAIIDIIYKCKGEKEILDKVGNFISEVKKSLE</sequence>
<protein>
    <recommendedName>
        <fullName evidence="1">Tryptophan synthase alpha chain</fullName>
        <ecNumber evidence="1">4.2.1.20</ecNumber>
    </recommendedName>
</protein>
<comment type="function">
    <text evidence="1">The alpha subunit is responsible for the aldol cleavage of indoleglycerol phosphate to indole and glyceraldehyde 3-phosphate.</text>
</comment>
<comment type="catalytic activity">
    <reaction evidence="1">
        <text>(1S,2R)-1-C-(indol-3-yl)glycerol 3-phosphate + L-serine = D-glyceraldehyde 3-phosphate + L-tryptophan + H2O</text>
        <dbReference type="Rhea" id="RHEA:10532"/>
        <dbReference type="ChEBI" id="CHEBI:15377"/>
        <dbReference type="ChEBI" id="CHEBI:33384"/>
        <dbReference type="ChEBI" id="CHEBI:57912"/>
        <dbReference type="ChEBI" id="CHEBI:58866"/>
        <dbReference type="ChEBI" id="CHEBI:59776"/>
        <dbReference type="EC" id="4.2.1.20"/>
    </reaction>
</comment>
<comment type="pathway">
    <text evidence="1">Amino-acid biosynthesis; L-tryptophan biosynthesis; L-tryptophan from chorismate: step 5/5.</text>
</comment>
<comment type="subunit">
    <text evidence="1">Tetramer of two alpha and two beta chains.</text>
</comment>
<comment type="similarity">
    <text evidence="1">Belongs to the TrpA family.</text>
</comment>
<evidence type="ECO:0000255" key="1">
    <source>
        <dbReference type="HAMAP-Rule" id="MF_00131"/>
    </source>
</evidence>
<accession>A5N7P1</accession>
<name>TRPA_CLOK5</name>
<feature type="chain" id="PRO_1000076350" description="Tryptophan synthase alpha chain">
    <location>
        <begin position="1"/>
        <end position="263"/>
    </location>
</feature>
<feature type="active site" description="Proton acceptor" evidence="1">
    <location>
        <position position="49"/>
    </location>
</feature>
<feature type="active site" description="Proton acceptor" evidence="1">
    <location>
        <position position="60"/>
    </location>
</feature>
<reference key="1">
    <citation type="journal article" date="2008" name="Proc. Natl. Acad. Sci. U.S.A.">
        <title>The genome of Clostridium kluyveri, a strict anaerobe with unique metabolic features.</title>
        <authorList>
            <person name="Seedorf H."/>
            <person name="Fricke W.F."/>
            <person name="Veith B."/>
            <person name="Brueggemann H."/>
            <person name="Liesegang H."/>
            <person name="Strittmatter A."/>
            <person name="Miethke M."/>
            <person name="Buckel W."/>
            <person name="Hinderberger J."/>
            <person name="Li F."/>
            <person name="Hagemeier C."/>
            <person name="Thauer R.K."/>
            <person name="Gottschalk G."/>
        </authorList>
    </citation>
    <scope>NUCLEOTIDE SEQUENCE [LARGE SCALE GENOMIC DNA]</scope>
    <source>
        <strain>ATCC 8527 / DSM 555 / NBRC 12016 / NCIMB 10680 / K1</strain>
    </source>
</reference>
<keyword id="KW-0028">Amino-acid biosynthesis</keyword>
<keyword id="KW-0057">Aromatic amino acid biosynthesis</keyword>
<keyword id="KW-0456">Lyase</keyword>
<keyword id="KW-1185">Reference proteome</keyword>
<keyword id="KW-0822">Tryptophan biosynthesis</keyword>
<dbReference type="EC" id="4.2.1.20" evidence="1"/>
<dbReference type="EMBL" id="CP000673">
    <property type="protein sequence ID" value="EDK33322.1"/>
    <property type="molecule type" value="Genomic_DNA"/>
</dbReference>
<dbReference type="RefSeq" id="WP_012101667.1">
    <property type="nucleotide sequence ID" value="NC_009706.1"/>
</dbReference>
<dbReference type="SMR" id="A5N7P1"/>
<dbReference type="STRING" id="431943.CKL_1280"/>
<dbReference type="KEGG" id="ckl:CKL_1280"/>
<dbReference type="eggNOG" id="COG0159">
    <property type="taxonomic scope" value="Bacteria"/>
</dbReference>
<dbReference type="HOGENOM" id="CLU_016734_0_0_9"/>
<dbReference type="UniPathway" id="UPA00035">
    <property type="reaction ID" value="UER00044"/>
</dbReference>
<dbReference type="Proteomes" id="UP000002411">
    <property type="component" value="Chromosome"/>
</dbReference>
<dbReference type="GO" id="GO:0005829">
    <property type="term" value="C:cytosol"/>
    <property type="evidence" value="ECO:0007669"/>
    <property type="project" value="TreeGrafter"/>
</dbReference>
<dbReference type="GO" id="GO:0004834">
    <property type="term" value="F:tryptophan synthase activity"/>
    <property type="evidence" value="ECO:0007669"/>
    <property type="project" value="UniProtKB-UniRule"/>
</dbReference>
<dbReference type="CDD" id="cd04724">
    <property type="entry name" value="Tryptophan_synthase_alpha"/>
    <property type="match status" value="1"/>
</dbReference>
<dbReference type="FunFam" id="3.20.20.70:FF:000037">
    <property type="entry name" value="Tryptophan synthase alpha chain"/>
    <property type="match status" value="1"/>
</dbReference>
<dbReference type="Gene3D" id="3.20.20.70">
    <property type="entry name" value="Aldolase class I"/>
    <property type="match status" value="1"/>
</dbReference>
<dbReference type="HAMAP" id="MF_00131">
    <property type="entry name" value="Trp_synth_alpha"/>
    <property type="match status" value="1"/>
</dbReference>
<dbReference type="InterPro" id="IPR013785">
    <property type="entry name" value="Aldolase_TIM"/>
</dbReference>
<dbReference type="InterPro" id="IPR011060">
    <property type="entry name" value="RibuloseP-bd_barrel"/>
</dbReference>
<dbReference type="InterPro" id="IPR018204">
    <property type="entry name" value="Trp_synthase_alpha_AS"/>
</dbReference>
<dbReference type="InterPro" id="IPR002028">
    <property type="entry name" value="Trp_synthase_suA"/>
</dbReference>
<dbReference type="NCBIfam" id="TIGR00262">
    <property type="entry name" value="trpA"/>
    <property type="match status" value="1"/>
</dbReference>
<dbReference type="PANTHER" id="PTHR43406:SF1">
    <property type="entry name" value="TRYPTOPHAN SYNTHASE ALPHA CHAIN, CHLOROPLASTIC"/>
    <property type="match status" value="1"/>
</dbReference>
<dbReference type="PANTHER" id="PTHR43406">
    <property type="entry name" value="TRYPTOPHAN SYNTHASE, ALPHA CHAIN"/>
    <property type="match status" value="1"/>
</dbReference>
<dbReference type="Pfam" id="PF00290">
    <property type="entry name" value="Trp_syntA"/>
    <property type="match status" value="1"/>
</dbReference>
<dbReference type="SUPFAM" id="SSF51366">
    <property type="entry name" value="Ribulose-phoshate binding barrel"/>
    <property type="match status" value="1"/>
</dbReference>
<dbReference type="PROSITE" id="PS00167">
    <property type="entry name" value="TRP_SYNTHASE_ALPHA"/>
    <property type="match status" value="1"/>
</dbReference>
<organism>
    <name type="scientific">Clostridium kluyveri (strain ATCC 8527 / DSM 555 / NBRC 12016 / NCIMB 10680 / K1)</name>
    <dbReference type="NCBI Taxonomy" id="431943"/>
    <lineage>
        <taxon>Bacteria</taxon>
        <taxon>Bacillati</taxon>
        <taxon>Bacillota</taxon>
        <taxon>Clostridia</taxon>
        <taxon>Eubacteriales</taxon>
        <taxon>Clostridiaceae</taxon>
        <taxon>Clostridium</taxon>
    </lineage>
</organism>
<proteinExistence type="inferred from homology"/>